<gene>
    <name evidence="1" type="primary">rplC</name>
    <name type="ordered locus">Lreu_1483</name>
</gene>
<comment type="function">
    <text evidence="1">One of the primary rRNA binding proteins, it binds directly near the 3'-end of the 23S rRNA, where it nucleates assembly of the 50S subunit.</text>
</comment>
<comment type="subunit">
    <text evidence="1">Part of the 50S ribosomal subunit. Forms a cluster with proteins L14 and L19.</text>
</comment>
<comment type="similarity">
    <text evidence="1">Belongs to the universal ribosomal protein uL3 family.</text>
</comment>
<accession>A5VLK5</accession>
<evidence type="ECO:0000255" key="1">
    <source>
        <dbReference type="HAMAP-Rule" id="MF_01325"/>
    </source>
</evidence>
<evidence type="ECO:0000256" key="2">
    <source>
        <dbReference type="SAM" id="MobiDB-lite"/>
    </source>
</evidence>
<evidence type="ECO:0000305" key="3"/>
<organism>
    <name type="scientific">Limosilactobacillus reuteri (strain DSM 20016)</name>
    <name type="common">Lactobacillus reuteri</name>
    <dbReference type="NCBI Taxonomy" id="557436"/>
    <lineage>
        <taxon>Bacteria</taxon>
        <taxon>Bacillati</taxon>
        <taxon>Bacillota</taxon>
        <taxon>Bacilli</taxon>
        <taxon>Lactobacillales</taxon>
        <taxon>Lactobacillaceae</taxon>
        <taxon>Limosilactobacillus</taxon>
    </lineage>
</organism>
<proteinExistence type="inferred from homology"/>
<dbReference type="EMBL" id="CP000705">
    <property type="protein sequence ID" value="ABQ83729.1"/>
    <property type="molecule type" value="Genomic_DNA"/>
</dbReference>
<dbReference type="RefSeq" id="WP_003664567.1">
    <property type="nucleotide sequence ID" value="NZ_AZDD01000010.1"/>
</dbReference>
<dbReference type="SMR" id="A5VLK5"/>
<dbReference type="STRING" id="557436.Lreu_1483"/>
<dbReference type="GeneID" id="77191479"/>
<dbReference type="KEGG" id="lre:Lreu_1483"/>
<dbReference type="PATRIC" id="fig|557436.17.peg.140"/>
<dbReference type="eggNOG" id="COG0087">
    <property type="taxonomic scope" value="Bacteria"/>
</dbReference>
<dbReference type="HOGENOM" id="CLU_044142_4_1_9"/>
<dbReference type="OMA" id="GKNIPCT"/>
<dbReference type="Proteomes" id="UP000001991">
    <property type="component" value="Chromosome"/>
</dbReference>
<dbReference type="GO" id="GO:0022625">
    <property type="term" value="C:cytosolic large ribosomal subunit"/>
    <property type="evidence" value="ECO:0007669"/>
    <property type="project" value="TreeGrafter"/>
</dbReference>
<dbReference type="GO" id="GO:0019843">
    <property type="term" value="F:rRNA binding"/>
    <property type="evidence" value="ECO:0007669"/>
    <property type="project" value="UniProtKB-UniRule"/>
</dbReference>
<dbReference type="GO" id="GO:0003735">
    <property type="term" value="F:structural constituent of ribosome"/>
    <property type="evidence" value="ECO:0007669"/>
    <property type="project" value="InterPro"/>
</dbReference>
<dbReference type="GO" id="GO:0006412">
    <property type="term" value="P:translation"/>
    <property type="evidence" value="ECO:0007669"/>
    <property type="project" value="UniProtKB-UniRule"/>
</dbReference>
<dbReference type="FunFam" id="2.40.30.10:FF:000004">
    <property type="entry name" value="50S ribosomal protein L3"/>
    <property type="match status" value="1"/>
</dbReference>
<dbReference type="FunFam" id="3.30.160.810:FF:000002">
    <property type="entry name" value="50S ribosomal protein L3"/>
    <property type="match status" value="1"/>
</dbReference>
<dbReference type="Gene3D" id="3.30.160.810">
    <property type="match status" value="1"/>
</dbReference>
<dbReference type="Gene3D" id="2.40.30.10">
    <property type="entry name" value="Translation factors"/>
    <property type="match status" value="1"/>
</dbReference>
<dbReference type="HAMAP" id="MF_01325_B">
    <property type="entry name" value="Ribosomal_uL3_B"/>
    <property type="match status" value="1"/>
</dbReference>
<dbReference type="InterPro" id="IPR000597">
    <property type="entry name" value="Ribosomal_uL3"/>
</dbReference>
<dbReference type="InterPro" id="IPR019927">
    <property type="entry name" value="Ribosomal_uL3_bac/org-type"/>
</dbReference>
<dbReference type="InterPro" id="IPR009000">
    <property type="entry name" value="Transl_B-barrel_sf"/>
</dbReference>
<dbReference type="NCBIfam" id="TIGR03625">
    <property type="entry name" value="L3_bact"/>
    <property type="match status" value="1"/>
</dbReference>
<dbReference type="PANTHER" id="PTHR11229">
    <property type="entry name" value="50S RIBOSOMAL PROTEIN L3"/>
    <property type="match status" value="1"/>
</dbReference>
<dbReference type="PANTHER" id="PTHR11229:SF16">
    <property type="entry name" value="LARGE RIBOSOMAL SUBUNIT PROTEIN UL3C"/>
    <property type="match status" value="1"/>
</dbReference>
<dbReference type="Pfam" id="PF00297">
    <property type="entry name" value="Ribosomal_L3"/>
    <property type="match status" value="1"/>
</dbReference>
<dbReference type="SUPFAM" id="SSF50447">
    <property type="entry name" value="Translation proteins"/>
    <property type="match status" value="1"/>
</dbReference>
<sequence length="219" mass="23757">MTKGILGKKVGMTQVFTDNGELVPVTVIDVTPNVVMQIKTVENDGYSAVQLGFDDKREVLSNKPEQGHAAKANTTPKRFIGEIRDAELGDIKVGDEVKADVFAEGETVDVTGTTKGHGYQGNIHKDNQSRGPMAHGSRYHRRPGSLGAIINRVFKGMKLPGRMGGKTVTMQHLQVVKVDLDNNVLLIKGNVPGANKSYVTIKNSVKANTKKSLSKQHNK</sequence>
<keyword id="KW-1185">Reference proteome</keyword>
<keyword id="KW-0687">Ribonucleoprotein</keyword>
<keyword id="KW-0689">Ribosomal protein</keyword>
<keyword id="KW-0694">RNA-binding</keyword>
<keyword id="KW-0699">rRNA-binding</keyword>
<reference key="1">
    <citation type="journal article" date="2011" name="PLoS Genet.">
        <title>The evolution of host specialization in the vertebrate gut symbiont Lactobacillus reuteri.</title>
        <authorList>
            <person name="Frese S.A."/>
            <person name="Benson A.K."/>
            <person name="Tannock G.W."/>
            <person name="Loach D.M."/>
            <person name="Kim J."/>
            <person name="Zhang M."/>
            <person name="Oh P.L."/>
            <person name="Heng N.C."/>
            <person name="Patil P.B."/>
            <person name="Juge N."/>
            <person name="Mackenzie D.A."/>
            <person name="Pearson B.M."/>
            <person name="Lapidus A."/>
            <person name="Dalin E."/>
            <person name="Tice H."/>
            <person name="Goltsman E."/>
            <person name="Land M."/>
            <person name="Hauser L."/>
            <person name="Ivanova N."/>
            <person name="Kyrpides N.C."/>
            <person name="Walter J."/>
        </authorList>
    </citation>
    <scope>NUCLEOTIDE SEQUENCE [LARGE SCALE GENOMIC DNA]</scope>
    <source>
        <strain>DSM 20016</strain>
    </source>
</reference>
<name>RL3_LIMRD</name>
<feature type="chain" id="PRO_0000353609" description="Large ribosomal subunit protein uL3">
    <location>
        <begin position="1"/>
        <end position="219"/>
    </location>
</feature>
<feature type="region of interest" description="Disordered" evidence="2">
    <location>
        <begin position="113"/>
        <end position="142"/>
    </location>
</feature>
<protein>
    <recommendedName>
        <fullName evidence="1">Large ribosomal subunit protein uL3</fullName>
    </recommendedName>
    <alternativeName>
        <fullName evidence="3">50S ribosomal protein L3</fullName>
    </alternativeName>
</protein>